<accession>Q9JIY8</accession>
<accession>Q8BQW2</accession>
<accession>Q91WM7</accession>
<proteinExistence type="evidence at protein level"/>
<sequence length="226" mass="25956">MAPYHIRKYQDSDHRSVVDLFRRGMEEHIPATFRHMLLLPRTLLLLLGVPLTLFLASGSWLLVLLSILTLFLSLWFLAKYTWEKHVMNCLHTDMADITRTYLSSHSSCFWVAESRGQTVGMVAARPVKDPLLQKKQLQLLHLSVSLQHRREGLGKAMVRTVLQFAQMQGFSEVVLSTSMLQYAALALYQGMGFQKTGETFYTYLSRLRKSPMINLKYSLTSREGDL</sequence>
<name>NT8F3_MOUSE</name>
<gene>
    <name evidence="10" type="primary">Nat8f3</name>
    <name evidence="4" type="synonym">Cml3</name>
</gene>
<keyword id="KW-0012">Acyltransferase</keyword>
<keyword id="KW-0963">Cytoplasm</keyword>
<keyword id="KW-0472">Membrane</keyword>
<keyword id="KW-0539">Nucleus</keyword>
<keyword id="KW-1185">Reference proteome</keyword>
<keyword id="KW-0808">Transferase</keyword>
<keyword id="KW-0812">Transmembrane</keyword>
<keyword id="KW-1133">Transmembrane helix</keyword>
<feature type="chain" id="PRO_0000284690" description="N-acetyltransferase family 8 member 3">
    <location>
        <begin position="1"/>
        <end position="226"/>
    </location>
</feature>
<feature type="transmembrane region" description="Helical" evidence="1">
    <location>
        <begin position="36"/>
        <end position="56"/>
    </location>
</feature>
<feature type="transmembrane region" description="Helical" evidence="1">
    <location>
        <begin position="58"/>
        <end position="78"/>
    </location>
</feature>
<feature type="domain" description="N-acetyltransferase" evidence="2">
    <location>
        <begin position="61"/>
        <end position="220"/>
    </location>
</feature>
<feature type="sequence conflict" description="In Ref. 2; BAC32679." evidence="5" ref="2">
    <original>D</original>
    <variation>G</variation>
    <location>
        <position position="11"/>
    </location>
</feature>
<feature type="sequence conflict" description="In Ref. 3; AAH92089/AAH14696." evidence="5" ref="3">
    <original>L</original>
    <variation>I</variation>
    <location>
        <position position="204"/>
    </location>
</feature>
<feature type="sequence conflict" description="In Ref. 3; AAH92089/AAH14696." evidence="5" ref="3">
    <original>S</original>
    <variation>SP</variation>
    <location>
        <position position="221"/>
    </location>
</feature>
<feature type="sequence conflict" description="In Ref. 2; BAC32679." evidence="5" ref="2">
    <original>R</original>
    <variation>PW</variation>
    <location>
        <position position="222"/>
    </location>
</feature>
<organism>
    <name type="scientific">Mus musculus</name>
    <name type="common">Mouse</name>
    <dbReference type="NCBI Taxonomy" id="10090"/>
    <lineage>
        <taxon>Eukaryota</taxon>
        <taxon>Metazoa</taxon>
        <taxon>Chordata</taxon>
        <taxon>Craniata</taxon>
        <taxon>Vertebrata</taxon>
        <taxon>Euteleostomi</taxon>
        <taxon>Mammalia</taxon>
        <taxon>Eutheria</taxon>
        <taxon>Euarchontoglires</taxon>
        <taxon>Glires</taxon>
        <taxon>Rodentia</taxon>
        <taxon>Myomorpha</taxon>
        <taxon>Muroidea</taxon>
        <taxon>Muridae</taxon>
        <taxon>Murinae</taxon>
        <taxon>Mus</taxon>
        <taxon>Mus</taxon>
    </lineage>
</organism>
<comment type="function">
    <text evidence="3">Has histone acetyltransferase activity in vitro, with specificity for histone H4.</text>
</comment>
<comment type="catalytic activity">
    <reaction evidence="3">
        <text>L-lysyl-[protein] + acetyl-CoA = N(6)-acetyl-L-lysyl-[protein] + CoA + H(+)</text>
        <dbReference type="Rhea" id="RHEA:45948"/>
        <dbReference type="Rhea" id="RHEA-COMP:9752"/>
        <dbReference type="Rhea" id="RHEA-COMP:10731"/>
        <dbReference type="ChEBI" id="CHEBI:15378"/>
        <dbReference type="ChEBI" id="CHEBI:29969"/>
        <dbReference type="ChEBI" id="CHEBI:57287"/>
        <dbReference type="ChEBI" id="CHEBI:57288"/>
        <dbReference type="ChEBI" id="CHEBI:61930"/>
        <dbReference type="EC" id="2.3.1.48"/>
    </reaction>
</comment>
<comment type="subcellular location">
    <subcellularLocation>
        <location evidence="6">Nucleus membrane</location>
        <topology evidence="1">Multi-pass membrane protein</topology>
    </subcellularLocation>
    <subcellularLocation>
        <location evidence="6">Cytoplasm</location>
        <location evidence="6">Perinuclear region</location>
    </subcellularLocation>
    <subcellularLocation>
        <location evidence="6">Cytoplasm</location>
    </subcellularLocation>
    <text evidence="3">C-terminally tagged constructs localize to the nuclear membrane and perinuclear region. N-terminally tagged constructs show a punctate cytoplasmic distribution.</text>
</comment>
<comment type="similarity">
    <text evidence="5">Belongs to the camello family.</text>
</comment>
<protein>
    <recommendedName>
        <fullName evidence="10">N-acetyltransferase family 8 member 3</fullName>
        <ecNumber evidence="3">2.3.1.48</ecNumber>
    </recommendedName>
    <alternativeName>
        <fullName evidence="4">Camello-like protein 3</fullName>
    </alternativeName>
    <alternativeName>
        <fullName evidence="4">N-acetyltransferase CML3</fullName>
    </alternativeName>
</protein>
<dbReference type="EC" id="2.3.1.48" evidence="3"/>
<dbReference type="EMBL" id="AF163316">
    <property type="protein sequence ID" value="AAF80485.1"/>
    <property type="molecule type" value="mRNA"/>
</dbReference>
<dbReference type="EMBL" id="AK046314">
    <property type="protein sequence ID" value="BAC32679.1"/>
    <property type="molecule type" value="mRNA"/>
</dbReference>
<dbReference type="EMBL" id="BC014696">
    <property type="protein sequence ID" value="AAH14696.1"/>
    <property type="molecule type" value="mRNA"/>
</dbReference>
<dbReference type="EMBL" id="BC092089">
    <property type="protein sequence ID" value="AAH92089.1"/>
    <property type="molecule type" value="mRNA"/>
</dbReference>
<dbReference type="RefSeq" id="NP_001032931.1">
    <property type="nucleotide sequence ID" value="NM_001037842.3"/>
</dbReference>
<dbReference type="RefSeq" id="NP_001188318.1">
    <property type="nucleotide sequence ID" value="NM_001201389.1"/>
</dbReference>
<dbReference type="RefSeq" id="XP_017177330.1">
    <property type="nucleotide sequence ID" value="XM_017321841.1"/>
</dbReference>
<dbReference type="SMR" id="Q9JIY8"/>
<dbReference type="FunCoup" id="Q9JIY8">
    <property type="interactions" value="110"/>
</dbReference>
<dbReference type="STRING" id="10090.ENSMUSP00000133846"/>
<dbReference type="iPTMnet" id="Q9JIY8"/>
<dbReference type="PhosphoSitePlus" id="Q9JIY8"/>
<dbReference type="jPOST" id="Q9JIY8"/>
<dbReference type="PaxDb" id="10090-ENSMUSP00000084938"/>
<dbReference type="PeptideAtlas" id="Q9JIY8"/>
<dbReference type="Pumba" id="Q9JIY8"/>
<dbReference type="DNASU" id="93674"/>
<dbReference type="Ensembl" id="ENSMUST00000087656.5">
    <property type="protein sequence ID" value="ENSMUSP00000084938.5"/>
    <property type="gene ID" value="ENSMUSG00000079495.3"/>
</dbReference>
<dbReference type="Ensembl" id="ENSMUST00000174143.2">
    <property type="protein sequence ID" value="ENSMUSP00000133846.2"/>
    <property type="gene ID" value="ENSMUSG00000079495.3"/>
</dbReference>
<dbReference type="GeneID" id="100504710"/>
<dbReference type="GeneID" id="93674"/>
<dbReference type="KEGG" id="mmu:100504710"/>
<dbReference type="KEGG" id="mmu:93674"/>
<dbReference type="UCSC" id="uc009cqc.3">
    <property type="organism name" value="mouse"/>
</dbReference>
<dbReference type="AGR" id="MGI:2136449"/>
<dbReference type="CTD" id="100504710"/>
<dbReference type="CTD" id="93674"/>
<dbReference type="MGI" id="MGI:2136449">
    <property type="gene designation" value="Nat8f3"/>
</dbReference>
<dbReference type="VEuPathDB" id="HostDB:ENSMUSG00000079495"/>
<dbReference type="eggNOG" id="KOG3139">
    <property type="taxonomic scope" value="Eukaryota"/>
</dbReference>
<dbReference type="GeneTree" id="ENSGT00950000182932"/>
<dbReference type="HOGENOM" id="CLU_013985_10_1_1"/>
<dbReference type="InParanoid" id="Q9JIY8"/>
<dbReference type="OMA" id="HRMKGIA"/>
<dbReference type="OrthoDB" id="41532at2759"/>
<dbReference type="PhylomeDB" id="Q9JIY8"/>
<dbReference type="TreeFam" id="TF324687"/>
<dbReference type="BioGRID-ORCS" id="100504710">
    <property type="hits" value="1 hit in 61 CRISPR screens"/>
</dbReference>
<dbReference type="BioGRID-ORCS" id="93674">
    <property type="hits" value="3 hits in 38 CRISPR screens"/>
</dbReference>
<dbReference type="ChiTaRS" id="Nat8f3">
    <property type="organism name" value="mouse"/>
</dbReference>
<dbReference type="PRO" id="PR:Q9JIY8"/>
<dbReference type="Proteomes" id="UP000000589">
    <property type="component" value="Chromosome 6"/>
</dbReference>
<dbReference type="RNAct" id="Q9JIY8">
    <property type="molecule type" value="protein"/>
</dbReference>
<dbReference type="Bgee" id="ENSMUSG00000079495">
    <property type="expression patterns" value="Expressed in proximal tubule and 30 other cell types or tissues"/>
</dbReference>
<dbReference type="GO" id="GO:0005783">
    <property type="term" value="C:endoplasmic reticulum"/>
    <property type="evidence" value="ECO:0000247"/>
    <property type="project" value="MGI"/>
</dbReference>
<dbReference type="GO" id="GO:0005794">
    <property type="term" value="C:Golgi apparatus"/>
    <property type="evidence" value="ECO:0000247"/>
    <property type="project" value="MGI"/>
</dbReference>
<dbReference type="GO" id="GO:0016020">
    <property type="term" value="C:membrane"/>
    <property type="evidence" value="ECO:0000303"/>
    <property type="project" value="UniProtKB"/>
</dbReference>
<dbReference type="GO" id="GO:0031965">
    <property type="term" value="C:nuclear membrane"/>
    <property type="evidence" value="ECO:0000314"/>
    <property type="project" value="MGI"/>
</dbReference>
<dbReference type="GO" id="GO:0005634">
    <property type="term" value="C:nucleus"/>
    <property type="evidence" value="ECO:0000314"/>
    <property type="project" value="MGI"/>
</dbReference>
<dbReference type="GO" id="GO:0048471">
    <property type="term" value="C:perinuclear region of cytoplasm"/>
    <property type="evidence" value="ECO:0007669"/>
    <property type="project" value="UniProtKB-SubCell"/>
</dbReference>
<dbReference type="GO" id="GO:0010485">
    <property type="term" value="F:histone H4 acetyltransferase activity"/>
    <property type="evidence" value="ECO:0000314"/>
    <property type="project" value="MGI"/>
</dbReference>
<dbReference type="GO" id="GO:0008080">
    <property type="term" value="F:N-acetyltransferase activity"/>
    <property type="evidence" value="ECO:0000303"/>
    <property type="project" value="UniProtKB"/>
</dbReference>
<dbReference type="GO" id="GO:0003401">
    <property type="term" value="P:axis elongation"/>
    <property type="evidence" value="ECO:0000266"/>
    <property type="project" value="MGI"/>
</dbReference>
<dbReference type="GO" id="GO:0001702">
    <property type="term" value="P:gastrulation with mouth forming second"/>
    <property type="evidence" value="ECO:0000303"/>
    <property type="project" value="UniProtKB"/>
</dbReference>
<dbReference type="GO" id="GO:0007162">
    <property type="term" value="P:negative regulation of cell adhesion"/>
    <property type="evidence" value="ECO:0000247"/>
    <property type="project" value="MGI"/>
</dbReference>
<dbReference type="CDD" id="cd04301">
    <property type="entry name" value="NAT_SF"/>
    <property type="match status" value="1"/>
</dbReference>
<dbReference type="FunFam" id="3.40.630.30:FF:000118">
    <property type="entry name" value="N-acetyltransferase family 8 member 3"/>
    <property type="match status" value="1"/>
</dbReference>
<dbReference type="Gene3D" id="3.40.630.30">
    <property type="match status" value="1"/>
</dbReference>
<dbReference type="InterPro" id="IPR016181">
    <property type="entry name" value="Acyl_CoA_acyltransferase"/>
</dbReference>
<dbReference type="InterPro" id="IPR000182">
    <property type="entry name" value="GNAT_dom"/>
</dbReference>
<dbReference type="InterPro" id="IPR050769">
    <property type="entry name" value="NAT_camello-type"/>
</dbReference>
<dbReference type="PANTHER" id="PTHR13947">
    <property type="entry name" value="GNAT FAMILY N-ACETYLTRANSFERASE"/>
    <property type="match status" value="1"/>
</dbReference>
<dbReference type="PANTHER" id="PTHR13947:SF2">
    <property type="entry name" value="N-ACETYLTRANSFERASE FAMILY 8 MEMBER 3-RELATED"/>
    <property type="match status" value="1"/>
</dbReference>
<dbReference type="Pfam" id="PF00583">
    <property type="entry name" value="Acetyltransf_1"/>
    <property type="match status" value="1"/>
</dbReference>
<dbReference type="SUPFAM" id="SSF55729">
    <property type="entry name" value="Acyl-CoA N-acyltransferases (Nat)"/>
    <property type="match status" value="1"/>
</dbReference>
<dbReference type="PROSITE" id="PS51186">
    <property type="entry name" value="GNAT"/>
    <property type="match status" value="1"/>
</dbReference>
<evidence type="ECO:0000255" key="1"/>
<evidence type="ECO:0000255" key="2">
    <source>
        <dbReference type="PROSITE-ProRule" id="PRU00532"/>
    </source>
</evidence>
<evidence type="ECO:0000269" key="3">
    <source>
    </source>
</evidence>
<evidence type="ECO:0000303" key="4">
    <source>
    </source>
</evidence>
<evidence type="ECO:0000305" key="5"/>
<evidence type="ECO:0000305" key="6">
    <source>
    </source>
</evidence>
<evidence type="ECO:0000312" key="7">
    <source>
        <dbReference type="EMBL" id="AAF80485.1"/>
    </source>
</evidence>
<evidence type="ECO:0000312" key="8">
    <source>
        <dbReference type="EMBL" id="AAH14696.1"/>
    </source>
</evidence>
<evidence type="ECO:0000312" key="9">
    <source>
        <dbReference type="EMBL" id="BAC32679.1"/>
    </source>
</evidence>
<evidence type="ECO:0000312" key="10">
    <source>
        <dbReference type="MGI" id="MGI:2136449"/>
    </source>
</evidence>
<reference evidence="7" key="1">
    <citation type="journal article" date="2001" name="Dev. Biol.">
        <title>Overexpression of camello, a member of a novel protein family, reduces blastomere adhesion and inhibits gastrulation in Xenopus laevis.</title>
        <authorList>
            <person name="Popsueva A.E."/>
            <person name="Luchinskaya N.N."/>
            <person name="Ludwig A.V."/>
            <person name="Zinovjeva O.Y."/>
            <person name="Poteryaev D.A."/>
            <person name="Feigelman M.M."/>
            <person name="Ponomarev M.B."/>
            <person name="Berekelya L."/>
            <person name="Belyavsky A.V."/>
        </authorList>
    </citation>
    <scope>NUCLEOTIDE SEQUENCE [MRNA]</scope>
</reference>
<reference evidence="9" key="2">
    <citation type="journal article" date="2005" name="Science">
        <title>The transcriptional landscape of the mammalian genome.</title>
        <authorList>
            <person name="Carninci P."/>
            <person name="Kasukawa T."/>
            <person name="Katayama S."/>
            <person name="Gough J."/>
            <person name="Frith M.C."/>
            <person name="Maeda N."/>
            <person name="Oyama R."/>
            <person name="Ravasi T."/>
            <person name="Lenhard B."/>
            <person name="Wells C."/>
            <person name="Kodzius R."/>
            <person name="Shimokawa K."/>
            <person name="Bajic V.B."/>
            <person name="Brenner S.E."/>
            <person name="Batalov S."/>
            <person name="Forrest A.R."/>
            <person name="Zavolan M."/>
            <person name="Davis M.J."/>
            <person name="Wilming L.G."/>
            <person name="Aidinis V."/>
            <person name="Allen J.E."/>
            <person name="Ambesi-Impiombato A."/>
            <person name="Apweiler R."/>
            <person name="Aturaliya R.N."/>
            <person name="Bailey T.L."/>
            <person name="Bansal M."/>
            <person name="Baxter L."/>
            <person name="Beisel K.W."/>
            <person name="Bersano T."/>
            <person name="Bono H."/>
            <person name="Chalk A.M."/>
            <person name="Chiu K.P."/>
            <person name="Choudhary V."/>
            <person name="Christoffels A."/>
            <person name="Clutterbuck D.R."/>
            <person name="Crowe M.L."/>
            <person name="Dalla E."/>
            <person name="Dalrymple B.P."/>
            <person name="de Bono B."/>
            <person name="Della Gatta G."/>
            <person name="di Bernardo D."/>
            <person name="Down T."/>
            <person name="Engstrom P."/>
            <person name="Fagiolini M."/>
            <person name="Faulkner G."/>
            <person name="Fletcher C.F."/>
            <person name="Fukushima T."/>
            <person name="Furuno M."/>
            <person name="Futaki S."/>
            <person name="Gariboldi M."/>
            <person name="Georgii-Hemming P."/>
            <person name="Gingeras T.R."/>
            <person name="Gojobori T."/>
            <person name="Green R.E."/>
            <person name="Gustincich S."/>
            <person name="Harbers M."/>
            <person name="Hayashi Y."/>
            <person name="Hensch T.K."/>
            <person name="Hirokawa N."/>
            <person name="Hill D."/>
            <person name="Huminiecki L."/>
            <person name="Iacono M."/>
            <person name="Ikeo K."/>
            <person name="Iwama A."/>
            <person name="Ishikawa T."/>
            <person name="Jakt M."/>
            <person name="Kanapin A."/>
            <person name="Katoh M."/>
            <person name="Kawasawa Y."/>
            <person name="Kelso J."/>
            <person name="Kitamura H."/>
            <person name="Kitano H."/>
            <person name="Kollias G."/>
            <person name="Krishnan S.P."/>
            <person name="Kruger A."/>
            <person name="Kummerfeld S.K."/>
            <person name="Kurochkin I.V."/>
            <person name="Lareau L.F."/>
            <person name="Lazarevic D."/>
            <person name="Lipovich L."/>
            <person name="Liu J."/>
            <person name="Liuni S."/>
            <person name="McWilliam S."/>
            <person name="Madan Babu M."/>
            <person name="Madera M."/>
            <person name="Marchionni L."/>
            <person name="Matsuda H."/>
            <person name="Matsuzawa S."/>
            <person name="Miki H."/>
            <person name="Mignone F."/>
            <person name="Miyake S."/>
            <person name="Morris K."/>
            <person name="Mottagui-Tabar S."/>
            <person name="Mulder N."/>
            <person name="Nakano N."/>
            <person name="Nakauchi H."/>
            <person name="Ng P."/>
            <person name="Nilsson R."/>
            <person name="Nishiguchi S."/>
            <person name="Nishikawa S."/>
            <person name="Nori F."/>
            <person name="Ohara O."/>
            <person name="Okazaki Y."/>
            <person name="Orlando V."/>
            <person name="Pang K.C."/>
            <person name="Pavan W.J."/>
            <person name="Pavesi G."/>
            <person name="Pesole G."/>
            <person name="Petrovsky N."/>
            <person name="Piazza S."/>
            <person name="Reed J."/>
            <person name="Reid J.F."/>
            <person name="Ring B.Z."/>
            <person name="Ringwald M."/>
            <person name="Rost B."/>
            <person name="Ruan Y."/>
            <person name="Salzberg S.L."/>
            <person name="Sandelin A."/>
            <person name="Schneider C."/>
            <person name="Schoenbach C."/>
            <person name="Sekiguchi K."/>
            <person name="Semple C.A."/>
            <person name="Seno S."/>
            <person name="Sessa L."/>
            <person name="Sheng Y."/>
            <person name="Shibata Y."/>
            <person name="Shimada H."/>
            <person name="Shimada K."/>
            <person name="Silva D."/>
            <person name="Sinclair B."/>
            <person name="Sperling S."/>
            <person name="Stupka E."/>
            <person name="Sugiura K."/>
            <person name="Sultana R."/>
            <person name="Takenaka Y."/>
            <person name="Taki K."/>
            <person name="Tammoja K."/>
            <person name="Tan S.L."/>
            <person name="Tang S."/>
            <person name="Taylor M.S."/>
            <person name="Tegner J."/>
            <person name="Teichmann S.A."/>
            <person name="Ueda H.R."/>
            <person name="van Nimwegen E."/>
            <person name="Verardo R."/>
            <person name="Wei C.L."/>
            <person name="Yagi K."/>
            <person name="Yamanishi H."/>
            <person name="Zabarovsky E."/>
            <person name="Zhu S."/>
            <person name="Zimmer A."/>
            <person name="Hide W."/>
            <person name="Bult C."/>
            <person name="Grimmond S.M."/>
            <person name="Teasdale R.D."/>
            <person name="Liu E.T."/>
            <person name="Brusic V."/>
            <person name="Quackenbush J."/>
            <person name="Wahlestedt C."/>
            <person name="Mattick J.S."/>
            <person name="Hume D.A."/>
            <person name="Kai C."/>
            <person name="Sasaki D."/>
            <person name="Tomaru Y."/>
            <person name="Fukuda S."/>
            <person name="Kanamori-Katayama M."/>
            <person name="Suzuki M."/>
            <person name="Aoki J."/>
            <person name="Arakawa T."/>
            <person name="Iida J."/>
            <person name="Imamura K."/>
            <person name="Itoh M."/>
            <person name="Kato T."/>
            <person name="Kawaji H."/>
            <person name="Kawagashira N."/>
            <person name="Kawashima T."/>
            <person name="Kojima M."/>
            <person name="Kondo S."/>
            <person name="Konno H."/>
            <person name="Nakano K."/>
            <person name="Ninomiya N."/>
            <person name="Nishio T."/>
            <person name="Okada M."/>
            <person name="Plessy C."/>
            <person name="Shibata K."/>
            <person name="Shiraki T."/>
            <person name="Suzuki S."/>
            <person name="Tagami M."/>
            <person name="Waki K."/>
            <person name="Watahiki A."/>
            <person name="Okamura-Oho Y."/>
            <person name="Suzuki H."/>
            <person name="Kawai J."/>
            <person name="Hayashizaki Y."/>
        </authorList>
    </citation>
    <scope>NUCLEOTIDE SEQUENCE [LARGE SCALE MRNA]</scope>
    <source>
        <strain evidence="9">C57BL/6J</strain>
        <tissue evidence="9">Corpora quadrigemina</tissue>
    </source>
</reference>
<reference evidence="8" key="3">
    <citation type="journal article" date="2004" name="Genome Res.">
        <title>The status, quality, and expansion of the NIH full-length cDNA project: the Mammalian Gene Collection (MGC).</title>
        <authorList>
            <consortium name="The MGC Project Team"/>
        </authorList>
    </citation>
    <scope>NUCLEOTIDE SEQUENCE [LARGE SCALE MRNA]</scope>
    <source>
        <strain evidence="8">FVB/N</strain>
        <tissue evidence="8">Kidney</tissue>
    </source>
</reference>
<reference key="4">
    <citation type="journal article" date="2010" name="Cell">
        <title>A tissue-specific atlas of mouse protein phosphorylation and expression.</title>
        <authorList>
            <person name="Huttlin E.L."/>
            <person name="Jedrychowski M.P."/>
            <person name="Elias J.E."/>
            <person name="Goswami T."/>
            <person name="Rad R."/>
            <person name="Beausoleil S.A."/>
            <person name="Villen J."/>
            <person name="Haas W."/>
            <person name="Sowa M.E."/>
            <person name="Gygi S.P."/>
        </authorList>
    </citation>
    <scope>IDENTIFICATION BY MASS SPECTROMETRY [LARGE SCALE ANALYSIS]</scope>
    <source>
        <tissue>Kidney</tissue>
    </source>
</reference>
<reference key="5">
    <citation type="journal article" date="2014" name="Sci. Rep.">
        <title>Camello, a novel family of Histone Acetyltransferases that acetylate histone H4 and is essential for zebrafish development.</title>
        <authorList>
            <person name="Karmodiya K."/>
            <person name="Anamika K."/>
            <person name="Muley V."/>
            <person name="Pradhan S.J."/>
            <person name="Bhide Y."/>
            <person name="Galande S."/>
        </authorList>
    </citation>
    <scope>FUNCTION</scope>
    <scope>CATALYTIC ACTIVITY</scope>
    <scope>SUBCELLULAR LOCATION</scope>
</reference>